<protein>
    <recommendedName>
        <fullName evidence="4">Major strawberry allergen Fra a 1.08</fullName>
    </recommendedName>
    <alternativeName>
        <fullName evidence="4">Class 10 plant pathogenesis-related protein Fra a 1.08</fullName>
        <shortName evidence="4">PR10-related protein Fra a 1.08</shortName>
        <ecNumber evidence="2">3.1.27.-</ecNumber>
    </alternativeName>
    <allergenName evidence="4">Fra a 1</allergenName>
</protein>
<reference key="1">
    <citation type="journal article" date="2016" name="J. Agric. Food Chem.">
        <title>Fra a 1.02 is the most potent isoform of the Bet v 1-like allergen in strawberry fruit.</title>
        <authorList>
            <person name="Franz-Oberdorf K."/>
            <person name="Eberlein B."/>
            <person name="Edelmann K."/>
            <person name="Huecherig S."/>
            <person name="Besbes F."/>
            <person name="Darsow U."/>
            <person name="Ring J."/>
            <person name="Schwab W."/>
        </authorList>
    </citation>
    <scope>NUCLEOTIDE SEQUENCE [MRNA]</scope>
    <scope>ALLERGEN</scope>
</reference>
<reference key="2">
    <citation type="journal article" date="2019" name="J. Plant Physiol.">
        <title>Phosphorylation-dependent ribonuclease activity of Fra a 1 proteins.</title>
        <authorList>
            <person name="Besbes F."/>
            <person name="Franz-Oberdorf K."/>
            <person name="Schwab W."/>
        </authorList>
    </citation>
    <scope>FUNCTION</scope>
    <scope>TISSUE SPECIFICITY</scope>
    <scope>PHOSPHORYLATION</scope>
</reference>
<dbReference type="EC" id="3.1.27.-" evidence="2"/>
<dbReference type="EMBL" id="KJ507739">
    <property type="protein sequence ID" value="AHZ10959.1"/>
    <property type="molecule type" value="mRNA"/>
</dbReference>
<dbReference type="SMR" id="A0A024B2V6"/>
<dbReference type="GO" id="GO:0005737">
    <property type="term" value="C:cytoplasm"/>
    <property type="evidence" value="ECO:0007669"/>
    <property type="project" value="TreeGrafter"/>
</dbReference>
<dbReference type="GO" id="GO:0005634">
    <property type="term" value="C:nucleus"/>
    <property type="evidence" value="ECO:0007669"/>
    <property type="project" value="TreeGrafter"/>
</dbReference>
<dbReference type="GO" id="GO:0010427">
    <property type="term" value="F:abscisic acid binding"/>
    <property type="evidence" value="ECO:0007669"/>
    <property type="project" value="InterPro"/>
</dbReference>
<dbReference type="GO" id="GO:0004518">
    <property type="term" value="F:nuclease activity"/>
    <property type="evidence" value="ECO:0007669"/>
    <property type="project" value="UniProtKB-KW"/>
</dbReference>
<dbReference type="GO" id="GO:0004864">
    <property type="term" value="F:protein phosphatase inhibitor activity"/>
    <property type="evidence" value="ECO:0007669"/>
    <property type="project" value="InterPro"/>
</dbReference>
<dbReference type="GO" id="GO:0038023">
    <property type="term" value="F:signaling receptor activity"/>
    <property type="evidence" value="ECO:0007669"/>
    <property type="project" value="InterPro"/>
</dbReference>
<dbReference type="GO" id="GO:0009738">
    <property type="term" value="P:abscisic acid-activated signaling pathway"/>
    <property type="evidence" value="ECO:0007669"/>
    <property type="project" value="InterPro"/>
</dbReference>
<dbReference type="GO" id="GO:0006952">
    <property type="term" value="P:defense response"/>
    <property type="evidence" value="ECO:0007669"/>
    <property type="project" value="UniProtKB-KW"/>
</dbReference>
<dbReference type="CDD" id="cd07816">
    <property type="entry name" value="Bet_v1-like"/>
    <property type="match status" value="1"/>
</dbReference>
<dbReference type="FunFam" id="3.30.530.20:FF:000007">
    <property type="entry name" value="Major pollen allergen Bet v 1-A"/>
    <property type="match status" value="1"/>
</dbReference>
<dbReference type="Gene3D" id="3.30.530.20">
    <property type="match status" value="1"/>
</dbReference>
<dbReference type="InterPro" id="IPR000916">
    <property type="entry name" value="Bet_v_I/MLP"/>
</dbReference>
<dbReference type="InterPro" id="IPR024949">
    <property type="entry name" value="Bet_v_I_allergen"/>
</dbReference>
<dbReference type="InterPro" id="IPR050279">
    <property type="entry name" value="Plant_def-hormone_signal"/>
</dbReference>
<dbReference type="InterPro" id="IPR023393">
    <property type="entry name" value="START-like_dom_sf"/>
</dbReference>
<dbReference type="PANTHER" id="PTHR31213">
    <property type="entry name" value="OS08G0374000 PROTEIN-RELATED"/>
    <property type="match status" value="1"/>
</dbReference>
<dbReference type="PANTHER" id="PTHR31213:SF55">
    <property type="entry name" value="STRESS-INDUCED PROTEIN SAM22"/>
    <property type="match status" value="1"/>
</dbReference>
<dbReference type="Pfam" id="PF00407">
    <property type="entry name" value="Bet_v_1"/>
    <property type="match status" value="1"/>
</dbReference>
<dbReference type="PRINTS" id="PR00634">
    <property type="entry name" value="BETALLERGEN"/>
</dbReference>
<dbReference type="SUPFAM" id="SSF55961">
    <property type="entry name" value="Bet v1-like"/>
    <property type="match status" value="1"/>
</dbReference>
<dbReference type="PROSITE" id="PS00451">
    <property type="entry name" value="PATHOGENESIS_BETVI"/>
    <property type="match status" value="1"/>
</dbReference>
<proteinExistence type="evidence at protein level"/>
<feature type="chain" id="PRO_0000447019" description="Major strawberry allergen Fra a 1.08">
    <location>
        <begin position="1"/>
        <end position="160"/>
    </location>
</feature>
<keyword id="KW-0020">Allergen</keyword>
<keyword id="KW-0378">Hydrolase</keyword>
<keyword id="KW-0540">Nuclease</keyword>
<keyword id="KW-0568">Pathogenesis-related protein</keyword>
<keyword id="KW-0597">Phosphoprotein</keyword>
<keyword id="KW-0611">Plant defense</keyword>
<name>FRA18_FRAAN</name>
<sequence length="160" mass="17525">MGVFTYETEFTSVIPPPRLYKAFVLDADNLIPKIAPQAVKSAEIVQGDGGVGTIKKIHLGEGSEYSYVKHQIDGLDKDNFVYNYSIIEGDAIGDKVEKISYEIKLVASPSGGSIIKSTSHYHCKGEVEIKEEHVKAGKEKAAGLFKIIENHLLANPEAYN</sequence>
<organism>
    <name type="scientific">Fragaria ananassa</name>
    <name type="common">Strawberry</name>
    <name type="synonym">Fragaria chiloensis x Fragaria virginiana</name>
    <dbReference type="NCBI Taxonomy" id="3747"/>
    <lineage>
        <taxon>Eukaryota</taxon>
        <taxon>Viridiplantae</taxon>
        <taxon>Streptophyta</taxon>
        <taxon>Embryophyta</taxon>
        <taxon>Tracheophyta</taxon>
        <taxon>Spermatophyta</taxon>
        <taxon>Magnoliopsida</taxon>
        <taxon>eudicotyledons</taxon>
        <taxon>Gunneridae</taxon>
        <taxon>Pentapetalae</taxon>
        <taxon>rosids</taxon>
        <taxon>fabids</taxon>
        <taxon>Rosales</taxon>
        <taxon>Rosaceae</taxon>
        <taxon>Rosoideae</taxon>
        <taxon>Potentilleae</taxon>
        <taxon>Fragariinae</taxon>
        <taxon>Fragaria</taxon>
    </lineage>
</organism>
<accession>A0A024B2V6</accession>
<gene>
    <name evidence="3" type="primary">Fra a 1.08</name>
</gene>
<comment type="function">
    <text evidence="2">Possesses ribonuclease activity in vitro.</text>
</comment>
<comment type="tissue specificity">
    <text evidence="2">Highly expressed in roots (PubMed:30572279). Expressed a low levels in ripe red fruits (PubMed:30572279).</text>
</comment>
<comment type="PTM">
    <text evidence="2">Phosphorylated in vivo. Phosphorylation prevents its activity as ribonuclease.</text>
</comment>
<comment type="allergen">
    <text evidence="1">May cause an allergic reaction in human (PubMed:27086707). Binds to IgE of patients allergic to birch Bet v 1 (PubMed:27086707). Causes degranulation of basophils sensitized with IgE of patients allergic to birch Bet v 1 (PubMed:27086707).</text>
</comment>
<comment type="similarity">
    <text evidence="4">Belongs to the BetVI family.</text>
</comment>
<evidence type="ECO:0000269" key="1">
    <source>
    </source>
</evidence>
<evidence type="ECO:0000269" key="2">
    <source>
    </source>
</evidence>
<evidence type="ECO:0000303" key="3">
    <source>
    </source>
</evidence>
<evidence type="ECO:0000305" key="4"/>